<reference key="1">
    <citation type="journal article" date="2005" name="Infect. Immun.">
        <title>Whole-genome analyses of speciation events in pathogenic Brucellae.</title>
        <authorList>
            <person name="Chain P.S."/>
            <person name="Comerci D.J."/>
            <person name="Tolmasky M.E."/>
            <person name="Larimer F.W."/>
            <person name="Malfatti S.A."/>
            <person name="Vergez L.M."/>
            <person name="Aguero F."/>
            <person name="Land M.L."/>
            <person name="Ugalde R.A."/>
            <person name="Garcia E."/>
        </authorList>
    </citation>
    <scope>NUCLEOTIDE SEQUENCE [LARGE SCALE GENOMIC DNA]</scope>
    <source>
        <strain>2308</strain>
    </source>
</reference>
<organism>
    <name type="scientific">Brucella abortus (strain 2308)</name>
    <dbReference type="NCBI Taxonomy" id="359391"/>
    <lineage>
        <taxon>Bacteria</taxon>
        <taxon>Pseudomonadati</taxon>
        <taxon>Pseudomonadota</taxon>
        <taxon>Alphaproteobacteria</taxon>
        <taxon>Hyphomicrobiales</taxon>
        <taxon>Brucellaceae</taxon>
        <taxon>Brucella/Ochrobactrum group</taxon>
        <taxon>Brucella</taxon>
    </lineage>
</organism>
<protein>
    <recommendedName>
        <fullName evidence="1">2-oxoglutarate dehydrogenase E1 component</fullName>
        <ecNumber evidence="1">1.2.4.2</ecNumber>
    </recommendedName>
    <alternativeName>
        <fullName evidence="1">Alpha-ketoglutarate dehydrogenase</fullName>
    </alternativeName>
</protein>
<feature type="chain" id="PRO_1000065698" description="2-oxoglutarate dehydrogenase E1 component">
    <location>
        <begin position="1"/>
        <end position="1004"/>
    </location>
</feature>
<dbReference type="EC" id="1.2.4.2" evidence="1"/>
<dbReference type="EMBL" id="AM040264">
    <property type="protein sequence ID" value="CAJ11879.1"/>
    <property type="molecule type" value="Genomic_DNA"/>
</dbReference>
<dbReference type="RefSeq" id="WP_002968648.1">
    <property type="nucleotide sequence ID" value="NZ_KN046823.1"/>
</dbReference>
<dbReference type="SMR" id="Q2YLS2"/>
<dbReference type="STRING" id="359391.BAB1_1923"/>
<dbReference type="KEGG" id="bmf:BAB1_1923"/>
<dbReference type="PATRIC" id="fig|359391.11.peg.1164"/>
<dbReference type="HOGENOM" id="CLU_004709_1_0_5"/>
<dbReference type="PhylomeDB" id="Q2YLS2"/>
<dbReference type="Proteomes" id="UP000002719">
    <property type="component" value="Chromosome I"/>
</dbReference>
<dbReference type="GO" id="GO:0005829">
    <property type="term" value="C:cytosol"/>
    <property type="evidence" value="ECO:0007669"/>
    <property type="project" value="TreeGrafter"/>
</dbReference>
<dbReference type="GO" id="GO:0045252">
    <property type="term" value="C:oxoglutarate dehydrogenase complex"/>
    <property type="evidence" value="ECO:0007669"/>
    <property type="project" value="TreeGrafter"/>
</dbReference>
<dbReference type="GO" id="GO:0004591">
    <property type="term" value="F:oxoglutarate dehydrogenase (succinyl-transferring) activity"/>
    <property type="evidence" value="ECO:0007669"/>
    <property type="project" value="UniProtKB-UniRule"/>
</dbReference>
<dbReference type="GO" id="GO:0030976">
    <property type="term" value="F:thiamine pyrophosphate binding"/>
    <property type="evidence" value="ECO:0007669"/>
    <property type="project" value="UniProtKB-UniRule"/>
</dbReference>
<dbReference type="GO" id="GO:0006096">
    <property type="term" value="P:glycolytic process"/>
    <property type="evidence" value="ECO:0007669"/>
    <property type="project" value="UniProtKB-UniRule"/>
</dbReference>
<dbReference type="GO" id="GO:0006099">
    <property type="term" value="P:tricarboxylic acid cycle"/>
    <property type="evidence" value="ECO:0007669"/>
    <property type="project" value="TreeGrafter"/>
</dbReference>
<dbReference type="CDD" id="cd02016">
    <property type="entry name" value="TPP_E1_OGDC_like"/>
    <property type="match status" value="1"/>
</dbReference>
<dbReference type="FunFam" id="3.40.50.12470:FF:000003">
    <property type="entry name" value="2-oxoglutarate dehydrogenase E1 component"/>
    <property type="match status" value="1"/>
</dbReference>
<dbReference type="Gene3D" id="3.40.50.12470">
    <property type="match status" value="1"/>
</dbReference>
<dbReference type="Gene3D" id="3.40.50.970">
    <property type="match status" value="1"/>
</dbReference>
<dbReference type="Gene3D" id="3.40.50.11610">
    <property type="entry name" value="Multifunctional 2-oxoglutarate metabolism enzyme, C-terminal domain"/>
    <property type="match status" value="1"/>
</dbReference>
<dbReference type="Gene3D" id="1.10.287.1150">
    <property type="entry name" value="TPP helical domain"/>
    <property type="match status" value="1"/>
</dbReference>
<dbReference type="HAMAP" id="MF_01169">
    <property type="entry name" value="SucA_OdhA"/>
    <property type="match status" value="1"/>
</dbReference>
<dbReference type="InterPro" id="IPR032106">
    <property type="entry name" value="2-oxogl_dehyd_N"/>
</dbReference>
<dbReference type="InterPro" id="IPR011603">
    <property type="entry name" value="2oxoglutarate_DH_E1"/>
</dbReference>
<dbReference type="InterPro" id="IPR023784">
    <property type="entry name" value="2oxoglutarate_DH_E1_bac"/>
</dbReference>
<dbReference type="InterPro" id="IPR001017">
    <property type="entry name" value="DH_E1"/>
</dbReference>
<dbReference type="InterPro" id="IPR042179">
    <property type="entry name" value="KGD_C_sf"/>
</dbReference>
<dbReference type="InterPro" id="IPR031717">
    <property type="entry name" value="ODO-1/KGD_C"/>
</dbReference>
<dbReference type="InterPro" id="IPR029061">
    <property type="entry name" value="THDP-binding"/>
</dbReference>
<dbReference type="InterPro" id="IPR005475">
    <property type="entry name" value="Transketolase-like_Pyr-bd"/>
</dbReference>
<dbReference type="NCBIfam" id="TIGR00239">
    <property type="entry name" value="2oxo_dh_E1"/>
    <property type="match status" value="1"/>
</dbReference>
<dbReference type="NCBIfam" id="NF006914">
    <property type="entry name" value="PRK09404.1"/>
    <property type="match status" value="1"/>
</dbReference>
<dbReference type="NCBIfam" id="NF008907">
    <property type="entry name" value="PRK12270.1"/>
    <property type="match status" value="1"/>
</dbReference>
<dbReference type="PANTHER" id="PTHR23152:SF4">
    <property type="entry name" value="2-OXOADIPATE DEHYDROGENASE COMPLEX COMPONENT E1"/>
    <property type="match status" value="1"/>
</dbReference>
<dbReference type="PANTHER" id="PTHR23152">
    <property type="entry name" value="2-OXOGLUTARATE DEHYDROGENASE"/>
    <property type="match status" value="1"/>
</dbReference>
<dbReference type="Pfam" id="PF16078">
    <property type="entry name" value="2-oxogl_dehyd_N"/>
    <property type="match status" value="1"/>
</dbReference>
<dbReference type="Pfam" id="PF00676">
    <property type="entry name" value="E1_dh"/>
    <property type="match status" value="1"/>
</dbReference>
<dbReference type="Pfam" id="PF16870">
    <property type="entry name" value="OxoGdeHyase_C"/>
    <property type="match status" value="1"/>
</dbReference>
<dbReference type="Pfam" id="PF02779">
    <property type="entry name" value="Transket_pyr"/>
    <property type="match status" value="1"/>
</dbReference>
<dbReference type="PIRSF" id="PIRSF000157">
    <property type="entry name" value="Oxoglu_dh_E1"/>
    <property type="match status" value="1"/>
</dbReference>
<dbReference type="SMART" id="SM00861">
    <property type="entry name" value="Transket_pyr"/>
    <property type="match status" value="1"/>
</dbReference>
<dbReference type="SUPFAM" id="SSF52518">
    <property type="entry name" value="Thiamin diphosphate-binding fold (THDP-binding)"/>
    <property type="match status" value="2"/>
</dbReference>
<proteinExistence type="inferred from homology"/>
<sequence>MAKQEQAPDRANDVFALTSFLYGGNADYIEELYAKYEDDPNSVDPQWRDFFAKLGDNADDVKKNAEGPSWTRKNWPIAANGELVSALDGNWAEVEKHVTDKLKGKAAKGEAKGAAGTPLTAEEITQAARDSVRAIMMIRAYRMRGHLHANLDPLGLAEKPNDYNELEPENYGFTPADYNRKIFIDNVLGLEYATVPEMLDILKRTYCGAIGVEFMHISDPAEKAWIQERIEGPDKKVAFTPEGKKAILSKLIEAEGFEQFIDVKYKGTKRFGLDGGESLIPALEQIVKRGGQMGLKEVVLGMAHRGRLNVLSQVMGKPHRAIFHEFKGGSYTPDDVEGSGDVKYHLGASSDREFDGNKVHLSLTANPSHLEIVNPVVMGKARAKQDLLVGRTRDDMVPLSERAKVLPLLLHGDAAFAGQGVVAECLGLSGLKGHRVAGTLHFIINNQIGFTTNPAFSRSSPYPSDVAKMIEAPIFHVNGDDPEAVVFAAKVATEFRMTFHKPVVIDMFCYRRFGHNEGDEPSFTQPLMYKAIRAHKTTVQLYGEKLIAEGLVTQDDIDRMKADWRQKLEGEFEAGQSYKPNKADWLDGAWAGLRTADNADEQRRGKTAVPVKTLKEIGKKLVEVPKDFHVHRTIQRFLDNRAKMMETGEGIDWATAESLAFGSLAVEGHPIRLSGQDVERGTFSQRHTVLYDQENQNRYIPLNNLQKGQAIYEAINSMLSEEAVLGYEYGYSLSDPRALVLWEAQFGDFANGAQVVFDQFISSGERKWLRMSGLVCLLPHGFEGQGPEHSSARLERYLQLCAEDNMQVANVTTPANYFHILRRQMKRDFRKPLIMMTPKSLLRHKRAISTLAELSGESSFHRLLWDDARYNKDKGIKLQKDAKIRRVVLCSGKVYYDLYEEREKRGIDDVYLLRVEQLYPFPAKALINELSRFRHAEMVWCQEEPKNMGAWSFIDPYLEWVLAHIDAKHQRVRYAGRPAAASPATGLMSKHLAQLAAFLEDALG</sequence>
<comment type="function">
    <text evidence="1">E1 component of the 2-oxoglutarate dehydrogenase (OGDH) complex which catalyzes the decarboxylation of 2-oxoglutarate, the first step in the conversion of 2-oxoglutarate to succinyl-CoA and CO(2).</text>
</comment>
<comment type="catalytic activity">
    <reaction evidence="1">
        <text>N(6)-[(R)-lipoyl]-L-lysyl-[protein] + 2-oxoglutarate + H(+) = N(6)-[(R)-S(8)-succinyldihydrolipoyl]-L-lysyl-[protein] + CO2</text>
        <dbReference type="Rhea" id="RHEA:12188"/>
        <dbReference type="Rhea" id="RHEA-COMP:10474"/>
        <dbReference type="Rhea" id="RHEA-COMP:20092"/>
        <dbReference type="ChEBI" id="CHEBI:15378"/>
        <dbReference type="ChEBI" id="CHEBI:16526"/>
        <dbReference type="ChEBI" id="CHEBI:16810"/>
        <dbReference type="ChEBI" id="CHEBI:83099"/>
        <dbReference type="ChEBI" id="CHEBI:83120"/>
        <dbReference type="EC" id="1.2.4.2"/>
    </reaction>
</comment>
<comment type="cofactor">
    <cofactor evidence="1">
        <name>thiamine diphosphate</name>
        <dbReference type="ChEBI" id="CHEBI:58937"/>
    </cofactor>
</comment>
<comment type="subunit">
    <text evidence="1">Homodimer. Part of the 2-oxoglutarate dehydrogenase (OGDH) complex composed of E1 (2-oxoglutarate dehydrogenase), E2 (dihydrolipoamide succinyltransferase) and E3 (dihydrolipoamide dehydrogenase); the complex contains multiple copies of the three enzymatic components (E1, E2 and E3).</text>
</comment>
<comment type="similarity">
    <text evidence="1">Belongs to the alpha-ketoglutarate dehydrogenase family.</text>
</comment>
<evidence type="ECO:0000255" key="1">
    <source>
        <dbReference type="HAMAP-Rule" id="MF_01169"/>
    </source>
</evidence>
<gene>
    <name evidence="1" type="primary">sucA</name>
    <name evidence="1" type="synonym">odhA</name>
    <name type="ordered locus">BAB1_1923</name>
</gene>
<accession>Q2YLS2</accession>
<keyword id="KW-0324">Glycolysis</keyword>
<keyword id="KW-0560">Oxidoreductase</keyword>
<keyword id="KW-1185">Reference proteome</keyword>
<keyword id="KW-0786">Thiamine pyrophosphate</keyword>
<name>ODO1_BRUA2</name>